<feature type="chain" id="PRO_0000161898" description="23S rRNA (uracil(1939)-C(5))-methyltransferase RlmD">
    <location>
        <begin position="1"/>
        <end position="438"/>
    </location>
</feature>
<feature type="domain" description="TRAM" evidence="1">
    <location>
        <begin position="10"/>
        <end position="68"/>
    </location>
</feature>
<feature type="active site" description="Nucleophile" evidence="1">
    <location>
        <position position="395"/>
    </location>
</feature>
<feature type="binding site" evidence="1">
    <location>
        <position position="81"/>
    </location>
    <ligand>
        <name>[4Fe-4S] cluster</name>
        <dbReference type="ChEBI" id="CHEBI:49883"/>
    </ligand>
</feature>
<feature type="binding site" evidence="1">
    <location>
        <position position="87"/>
    </location>
    <ligand>
        <name>[4Fe-4S] cluster</name>
        <dbReference type="ChEBI" id="CHEBI:49883"/>
    </ligand>
</feature>
<feature type="binding site" evidence="1">
    <location>
        <position position="90"/>
    </location>
    <ligand>
        <name>[4Fe-4S] cluster</name>
        <dbReference type="ChEBI" id="CHEBI:49883"/>
    </ligand>
</feature>
<feature type="binding site" evidence="1">
    <location>
        <position position="168"/>
    </location>
    <ligand>
        <name>[4Fe-4S] cluster</name>
        <dbReference type="ChEBI" id="CHEBI:49883"/>
    </ligand>
</feature>
<feature type="binding site" evidence="1">
    <location>
        <position position="271"/>
    </location>
    <ligand>
        <name>S-adenosyl-L-methionine</name>
        <dbReference type="ChEBI" id="CHEBI:59789"/>
    </ligand>
</feature>
<feature type="binding site" evidence="1">
    <location>
        <position position="300"/>
    </location>
    <ligand>
        <name>S-adenosyl-L-methionine</name>
        <dbReference type="ChEBI" id="CHEBI:59789"/>
    </ligand>
</feature>
<feature type="binding site" evidence="1">
    <location>
        <position position="305"/>
    </location>
    <ligand>
        <name>S-adenosyl-L-methionine</name>
        <dbReference type="ChEBI" id="CHEBI:59789"/>
    </ligand>
</feature>
<feature type="binding site" evidence="1">
    <location>
        <position position="321"/>
    </location>
    <ligand>
        <name>S-adenosyl-L-methionine</name>
        <dbReference type="ChEBI" id="CHEBI:59789"/>
    </ligand>
</feature>
<feature type="binding site" evidence="1">
    <location>
        <position position="348"/>
    </location>
    <ligand>
        <name>S-adenosyl-L-methionine</name>
        <dbReference type="ChEBI" id="CHEBI:59789"/>
    </ligand>
</feature>
<feature type="binding site" evidence="1">
    <location>
        <position position="369"/>
    </location>
    <ligand>
        <name>S-adenosyl-L-methionine</name>
        <dbReference type="ChEBI" id="CHEBI:59789"/>
    </ligand>
</feature>
<protein>
    <recommendedName>
        <fullName evidence="1">23S rRNA (uracil(1939)-C(5))-methyltransferase RlmD</fullName>
        <ecNumber evidence="1">2.1.1.190</ecNumber>
    </recommendedName>
    <alternativeName>
        <fullName evidence="1">23S rRNA(m5U1939)-methyltransferase</fullName>
    </alternativeName>
</protein>
<proteinExistence type="inferred from homology"/>
<accession>P44643</accession>
<dbReference type="EC" id="2.1.1.190" evidence="1"/>
<dbReference type="EMBL" id="L42023">
    <property type="protein sequence ID" value="AAC21995.1"/>
    <property type="molecule type" value="Genomic_DNA"/>
</dbReference>
<dbReference type="PIR" id="C64148">
    <property type="entry name" value="C64148"/>
</dbReference>
<dbReference type="RefSeq" id="NP_438497.1">
    <property type="nucleotide sequence ID" value="NC_000907.1"/>
</dbReference>
<dbReference type="SMR" id="P44643"/>
<dbReference type="STRING" id="71421.HI_0333"/>
<dbReference type="EnsemblBacteria" id="AAC21995">
    <property type="protein sequence ID" value="AAC21995"/>
    <property type="gene ID" value="HI_0333"/>
</dbReference>
<dbReference type="KEGG" id="hin:HI_0333"/>
<dbReference type="PATRIC" id="fig|71421.8.peg.350"/>
<dbReference type="eggNOG" id="COG2265">
    <property type="taxonomic scope" value="Bacteria"/>
</dbReference>
<dbReference type="HOGENOM" id="CLU_014689_8_2_6"/>
<dbReference type="OrthoDB" id="9804590at2"/>
<dbReference type="PhylomeDB" id="P44643"/>
<dbReference type="BioCyc" id="HINF71421:G1GJ1-349-MONOMER"/>
<dbReference type="Proteomes" id="UP000000579">
    <property type="component" value="Chromosome"/>
</dbReference>
<dbReference type="GO" id="GO:0051539">
    <property type="term" value="F:4 iron, 4 sulfur cluster binding"/>
    <property type="evidence" value="ECO:0007669"/>
    <property type="project" value="UniProtKB-KW"/>
</dbReference>
<dbReference type="GO" id="GO:0005506">
    <property type="term" value="F:iron ion binding"/>
    <property type="evidence" value="ECO:0007669"/>
    <property type="project" value="UniProtKB-UniRule"/>
</dbReference>
<dbReference type="GO" id="GO:0003723">
    <property type="term" value="F:RNA binding"/>
    <property type="evidence" value="ECO:0007669"/>
    <property type="project" value="InterPro"/>
</dbReference>
<dbReference type="GO" id="GO:0070041">
    <property type="term" value="F:rRNA (uridine-C5-)-methyltransferase activity"/>
    <property type="evidence" value="ECO:0000318"/>
    <property type="project" value="GO_Central"/>
</dbReference>
<dbReference type="GO" id="GO:0070475">
    <property type="term" value="P:rRNA base methylation"/>
    <property type="evidence" value="ECO:0000318"/>
    <property type="project" value="GO_Central"/>
</dbReference>
<dbReference type="CDD" id="cd02440">
    <property type="entry name" value="AdoMet_MTases"/>
    <property type="match status" value="1"/>
</dbReference>
<dbReference type="FunFam" id="3.40.50.150:FF:000009">
    <property type="entry name" value="23S rRNA (Uracil(1939)-C(5))-methyltransferase RlmD"/>
    <property type="match status" value="1"/>
</dbReference>
<dbReference type="FunFam" id="2.40.50.1070:FF:000004">
    <property type="entry name" value="23S rRNA (uracil(1939)-C(5))-methyltransferase RlmD"/>
    <property type="match status" value="1"/>
</dbReference>
<dbReference type="FunFam" id="2.40.50.140:FF:000097">
    <property type="entry name" value="23S rRNA (uracil(1939)-C(5))-methyltransferase RlmD"/>
    <property type="match status" value="1"/>
</dbReference>
<dbReference type="Gene3D" id="2.40.50.1070">
    <property type="match status" value="1"/>
</dbReference>
<dbReference type="Gene3D" id="2.40.50.140">
    <property type="entry name" value="Nucleic acid-binding proteins"/>
    <property type="match status" value="1"/>
</dbReference>
<dbReference type="Gene3D" id="3.40.50.150">
    <property type="entry name" value="Vaccinia Virus protein VP39"/>
    <property type="match status" value="1"/>
</dbReference>
<dbReference type="HAMAP" id="MF_01010">
    <property type="entry name" value="23SrRNA_methyltr_RlmD"/>
    <property type="match status" value="1"/>
</dbReference>
<dbReference type="InterPro" id="IPR001566">
    <property type="entry name" value="23S_rRNA_MeTrfase_RlmD"/>
</dbReference>
<dbReference type="InterPro" id="IPR030390">
    <property type="entry name" value="MeTrfase_TrmA_AS"/>
</dbReference>
<dbReference type="InterPro" id="IPR030391">
    <property type="entry name" value="MeTrfase_TrmA_CS"/>
</dbReference>
<dbReference type="InterPro" id="IPR012340">
    <property type="entry name" value="NA-bd_OB-fold"/>
</dbReference>
<dbReference type="InterPro" id="IPR029063">
    <property type="entry name" value="SAM-dependent_MTases_sf"/>
</dbReference>
<dbReference type="InterPro" id="IPR002792">
    <property type="entry name" value="TRAM_dom"/>
</dbReference>
<dbReference type="InterPro" id="IPR010280">
    <property type="entry name" value="U5_MeTrfase_fam"/>
</dbReference>
<dbReference type="NCBIfam" id="NF009639">
    <property type="entry name" value="PRK13168.1"/>
    <property type="match status" value="1"/>
</dbReference>
<dbReference type="NCBIfam" id="TIGR00479">
    <property type="entry name" value="rumA"/>
    <property type="match status" value="1"/>
</dbReference>
<dbReference type="PANTHER" id="PTHR11061:SF49">
    <property type="entry name" value="23S RRNA (URACIL(1939)-C(5))-METHYLTRANSFERASE RLMD"/>
    <property type="match status" value="1"/>
</dbReference>
<dbReference type="PANTHER" id="PTHR11061">
    <property type="entry name" value="RNA M5U METHYLTRANSFERASE"/>
    <property type="match status" value="1"/>
</dbReference>
<dbReference type="Pfam" id="PF01938">
    <property type="entry name" value="TRAM"/>
    <property type="match status" value="1"/>
</dbReference>
<dbReference type="Pfam" id="PF05958">
    <property type="entry name" value="tRNA_U5-meth_tr"/>
    <property type="match status" value="1"/>
</dbReference>
<dbReference type="SUPFAM" id="SSF50249">
    <property type="entry name" value="Nucleic acid-binding proteins"/>
    <property type="match status" value="1"/>
</dbReference>
<dbReference type="SUPFAM" id="SSF53335">
    <property type="entry name" value="S-adenosyl-L-methionine-dependent methyltransferases"/>
    <property type="match status" value="1"/>
</dbReference>
<dbReference type="PROSITE" id="PS51687">
    <property type="entry name" value="SAM_MT_RNA_M5U"/>
    <property type="match status" value="1"/>
</dbReference>
<dbReference type="PROSITE" id="PS50926">
    <property type="entry name" value="TRAM"/>
    <property type="match status" value="1"/>
</dbReference>
<dbReference type="PROSITE" id="PS01230">
    <property type="entry name" value="TRMA_1"/>
    <property type="match status" value="1"/>
</dbReference>
<dbReference type="PROSITE" id="PS01231">
    <property type="entry name" value="TRMA_2"/>
    <property type="match status" value="1"/>
</dbReference>
<keyword id="KW-0004">4Fe-4S</keyword>
<keyword id="KW-0408">Iron</keyword>
<keyword id="KW-0411">Iron-sulfur</keyword>
<keyword id="KW-0479">Metal-binding</keyword>
<keyword id="KW-0489">Methyltransferase</keyword>
<keyword id="KW-1185">Reference proteome</keyword>
<keyword id="KW-0698">rRNA processing</keyword>
<keyword id="KW-0949">S-adenosyl-L-methionine</keyword>
<keyword id="KW-0808">Transferase</keyword>
<evidence type="ECO:0000255" key="1">
    <source>
        <dbReference type="HAMAP-Rule" id="MF_01010"/>
    </source>
</evidence>
<reference key="1">
    <citation type="journal article" date="1995" name="Science">
        <title>Whole-genome random sequencing and assembly of Haemophilus influenzae Rd.</title>
        <authorList>
            <person name="Fleischmann R.D."/>
            <person name="Adams M.D."/>
            <person name="White O."/>
            <person name="Clayton R.A."/>
            <person name="Kirkness E.F."/>
            <person name="Kerlavage A.R."/>
            <person name="Bult C.J."/>
            <person name="Tomb J.-F."/>
            <person name="Dougherty B.A."/>
            <person name="Merrick J.M."/>
            <person name="McKenney K."/>
            <person name="Sutton G.G."/>
            <person name="FitzHugh W."/>
            <person name="Fields C.A."/>
            <person name="Gocayne J.D."/>
            <person name="Scott J.D."/>
            <person name="Shirley R."/>
            <person name="Liu L.-I."/>
            <person name="Glodek A."/>
            <person name="Kelley J.M."/>
            <person name="Weidman J.F."/>
            <person name="Phillips C.A."/>
            <person name="Spriggs T."/>
            <person name="Hedblom E."/>
            <person name="Cotton M.D."/>
            <person name="Utterback T.R."/>
            <person name="Hanna M.C."/>
            <person name="Nguyen D.T."/>
            <person name="Saudek D.M."/>
            <person name="Brandon R.C."/>
            <person name="Fine L.D."/>
            <person name="Fritchman J.L."/>
            <person name="Fuhrmann J.L."/>
            <person name="Geoghagen N.S.M."/>
            <person name="Gnehm C.L."/>
            <person name="McDonald L.A."/>
            <person name="Small K.V."/>
            <person name="Fraser C.M."/>
            <person name="Smith H.O."/>
            <person name="Venter J.C."/>
        </authorList>
    </citation>
    <scope>NUCLEOTIDE SEQUENCE [LARGE SCALE GENOMIC DNA]</scope>
    <source>
        <strain>ATCC 51907 / DSM 11121 / KW20 / Rd</strain>
    </source>
</reference>
<comment type="function">
    <text evidence="1">Catalyzes the formation of 5-methyl-uridine at position 1939 (m5U1939) in 23S rRNA.</text>
</comment>
<comment type="catalytic activity">
    <reaction evidence="1">
        <text>uridine(1939) in 23S rRNA + S-adenosyl-L-methionine = 5-methyluridine(1939) in 23S rRNA + S-adenosyl-L-homocysteine + H(+)</text>
        <dbReference type="Rhea" id="RHEA:42908"/>
        <dbReference type="Rhea" id="RHEA-COMP:10278"/>
        <dbReference type="Rhea" id="RHEA-COMP:10279"/>
        <dbReference type="ChEBI" id="CHEBI:15378"/>
        <dbReference type="ChEBI" id="CHEBI:57856"/>
        <dbReference type="ChEBI" id="CHEBI:59789"/>
        <dbReference type="ChEBI" id="CHEBI:65315"/>
        <dbReference type="ChEBI" id="CHEBI:74447"/>
        <dbReference type="EC" id="2.1.1.190"/>
    </reaction>
</comment>
<comment type="similarity">
    <text evidence="1">Belongs to the class I-like SAM-binding methyltransferase superfamily. RNA M5U methyltransferase family. RlmD subfamily.</text>
</comment>
<gene>
    <name evidence="1" type="primary">rlmD</name>
    <name type="synonym">rumA</name>
    <name type="ordered locus">HI_0333</name>
</gene>
<organism>
    <name type="scientific">Haemophilus influenzae (strain ATCC 51907 / DSM 11121 / KW20 / Rd)</name>
    <dbReference type="NCBI Taxonomy" id="71421"/>
    <lineage>
        <taxon>Bacteria</taxon>
        <taxon>Pseudomonadati</taxon>
        <taxon>Pseudomonadota</taxon>
        <taxon>Gammaproteobacteria</taxon>
        <taxon>Pasteurellales</taxon>
        <taxon>Pasteurellaceae</taxon>
        <taxon>Haemophilus</taxon>
    </lineage>
</organism>
<name>RLMD_HAEIN</name>
<sequence length="438" mass="49870">MVLLYTPKQKTKNVQTITADILDLDYQGLGVAKINGKTWFIENALPHEKVECRILEDKRQYGHAIVKKWRVKSPERLEPKCAHFMRCGGCQGQHIPIEMQRKAKESALFKRLSKLQSEPISFQPMICGDAWAYRRRVRLSLWFNPSTKQIEMGFRQKNTNDLIPVQSCEVAEPAINYLLPKLTALLEKFSAPKQLGHIELVAADNGVAMLLRYTKNLAEIDRTLLLKFAEQEKLMLFLQSDKGIEQIYGDAPYYQFSDGIKLHFDIRDFIQVNSALNEPMVNTALDWLELSQQDCVLDLFCGMGNFTLPLAKRVKSAVGIEGVFEMVQKAAQNAERNQIKNIEFFQADLDQSFVEQPWANQSFNKILLDPPRSGAAFALNALCELKAEKILYVSCNPATLVRDAEILCNFGYKIEKSAVIDMFPHTGHLESITLFTTK</sequence>